<name>KPRS_BIFLO</name>
<feature type="chain" id="PRO_0000141111" description="Ribose-phosphate pyrophosphokinase">
    <location>
        <begin position="1"/>
        <end position="340"/>
    </location>
</feature>
<feature type="active site" evidence="1">
    <location>
        <position position="206"/>
    </location>
</feature>
<feature type="binding site" evidence="1">
    <location>
        <begin position="47"/>
        <end position="49"/>
    </location>
    <ligand>
        <name>ATP</name>
        <dbReference type="ChEBI" id="CHEBI:30616"/>
    </ligand>
</feature>
<feature type="binding site" evidence="1">
    <location>
        <begin position="106"/>
        <end position="107"/>
    </location>
    <ligand>
        <name>ATP</name>
        <dbReference type="ChEBI" id="CHEBI:30616"/>
    </ligand>
</feature>
<feature type="binding site" evidence="1">
    <location>
        <position position="140"/>
    </location>
    <ligand>
        <name>Mg(2+)</name>
        <dbReference type="ChEBI" id="CHEBI:18420"/>
        <label>1</label>
    </ligand>
</feature>
<feature type="binding site" evidence="1">
    <location>
        <position position="182"/>
    </location>
    <ligand>
        <name>Mg(2+)</name>
        <dbReference type="ChEBI" id="CHEBI:18420"/>
        <label>2</label>
    </ligand>
</feature>
<feature type="binding site" evidence="1">
    <location>
        <position position="208"/>
    </location>
    <ligand>
        <name>D-ribose 5-phosphate</name>
        <dbReference type="ChEBI" id="CHEBI:78346"/>
    </ligand>
</feature>
<feature type="binding site" evidence="1">
    <location>
        <position position="234"/>
    </location>
    <ligand>
        <name>D-ribose 5-phosphate</name>
        <dbReference type="ChEBI" id="CHEBI:78346"/>
    </ligand>
</feature>
<feature type="binding site" evidence="1">
    <location>
        <begin position="238"/>
        <end position="242"/>
    </location>
    <ligand>
        <name>D-ribose 5-phosphate</name>
        <dbReference type="ChEBI" id="CHEBI:78346"/>
    </ligand>
</feature>
<gene>
    <name evidence="1" type="primary">prs</name>
    <name type="synonym">prsA</name>
    <name type="ordered locus">BL0963</name>
</gene>
<sequence length="340" mass="36863">MVSAILEGKPDKNLILVTGRIHPKLAEDVAEQLGIDVLETTAYDFANGEMYVRYTESVRGADVFVLQSHYKPINKAIMEQLIMIDALKRASARSITAVCPLLGYSRQDKKHRGREPISCRLVFDLLKTAGADRIMSVDLHAAQSQGFFDGPVDHLVAMPVLVDYIRDRFQGHLDNVAVVSPDAGRIRVAEQWAQRLGGGPLAFVHKTRDITRPNQAVANRVVGDVAGKDCVLVDDLIDTAGTIAGACHVLQDAGAKSVTVVATHGVLSGPAVERLKNCGAREVVLTDTVPIPEEKRWDGLTVLSIAPLLASAIRAVFEDGSVAELFDTYPEHHGQGFLFA</sequence>
<keyword id="KW-0067">ATP-binding</keyword>
<keyword id="KW-0963">Cytoplasm</keyword>
<keyword id="KW-0418">Kinase</keyword>
<keyword id="KW-0460">Magnesium</keyword>
<keyword id="KW-0479">Metal-binding</keyword>
<keyword id="KW-0545">Nucleotide biosynthesis</keyword>
<keyword id="KW-0547">Nucleotide-binding</keyword>
<keyword id="KW-1185">Reference proteome</keyword>
<keyword id="KW-0808">Transferase</keyword>
<accession>Q8G5P2</accession>
<proteinExistence type="inferred from homology"/>
<evidence type="ECO:0000255" key="1">
    <source>
        <dbReference type="HAMAP-Rule" id="MF_00583"/>
    </source>
</evidence>
<evidence type="ECO:0000305" key="2"/>
<reference key="1">
    <citation type="journal article" date="2002" name="Proc. Natl. Acad. Sci. U.S.A.">
        <title>The genome sequence of Bifidobacterium longum reflects its adaptation to the human gastrointestinal tract.</title>
        <authorList>
            <person name="Schell M.A."/>
            <person name="Karmirantzou M."/>
            <person name="Snel B."/>
            <person name="Vilanova D."/>
            <person name="Berger B."/>
            <person name="Pessi G."/>
            <person name="Zwahlen M.-C."/>
            <person name="Desiere F."/>
            <person name="Bork P."/>
            <person name="Delley M."/>
            <person name="Pridmore R.D."/>
            <person name="Arigoni F."/>
        </authorList>
    </citation>
    <scope>NUCLEOTIDE SEQUENCE [LARGE SCALE GENOMIC DNA]</scope>
    <source>
        <strain>NCC 2705</strain>
    </source>
</reference>
<dbReference type="EC" id="2.7.6.1" evidence="1"/>
<dbReference type="EMBL" id="AE014295">
    <property type="protein sequence ID" value="AAN24774.1"/>
    <property type="status" value="ALT_INIT"/>
    <property type="molecule type" value="Genomic_DNA"/>
</dbReference>
<dbReference type="RefSeq" id="NP_696138.1">
    <property type="nucleotide sequence ID" value="NC_004307.2"/>
</dbReference>
<dbReference type="RefSeq" id="WP_007052033.1">
    <property type="nucleotide sequence ID" value="NC_004307.2"/>
</dbReference>
<dbReference type="SMR" id="Q8G5P2"/>
<dbReference type="STRING" id="206672.BL0963"/>
<dbReference type="EnsemblBacteria" id="AAN24774">
    <property type="protein sequence ID" value="AAN24774"/>
    <property type="gene ID" value="BL0963"/>
</dbReference>
<dbReference type="KEGG" id="blo:BL0963"/>
<dbReference type="PATRIC" id="fig|206672.9.peg.667"/>
<dbReference type="HOGENOM" id="CLU_033546_2_0_11"/>
<dbReference type="OrthoDB" id="9777067at2"/>
<dbReference type="UniPathway" id="UPA00087">
    <property type="reaction ID" value="UER00172"/>
</dbReference>
<dbReference type="Proteomes" id="UP000000439">
    <property type="component" value="Chromosome"/>
</dbReference>
<dbReference type="GO" id="GO:0005737">
    <property type="term" value="C:cytoplasm"/>
    <property type="evidence" value="ECO:0007669"/>
    <property type="project" value="UniProtKB-SubCell"/>
</dbReference>
<dbReference type="GO" id="GO:0002189">
    <property type="term" value="C:ribose phosphate diphosphokinase complex"/>
    <property type="evidence" value="ECO:0007669"/>
    <property type="project" value="TreeGrafter"/>
</dbReference>
<dbReference type="GO" id="GO:0005524">
    <property type="term" value="F:ATP binding"/>
    <property type="evidence" value="ECO:0007669"/>
    <property type="project" value="UniProtKB-KW"/>
</dbReference>
<dbReference type="GO" id="GO:0016301">
    <property type="term" value="F:kinase activity"/>
    <property type="evidence" value="ECO:0007669"/>
    <property type="project" value="UniProtKB-KW"/>
</dbReference>
<dbReference type="GO" id="GO:0000287">
    <property type="term" value="F:magnesium ion binding"/>
    <property type="evidence" value="ECO:0007669"/>
    <property type="project" value="UniProtKB-UniRule"/>
</dbReference>
<dbReference type="GO" id="GO:0004749">
    <property type="term" value="F:ribose phosphate diphosphokinase activity"/>
    <property type="evidence" value="ECO:0007669"/>
    <property type="project" value="UniProtKB-UniRule"/>
</dbReference>
<dbReference type="GO" id="GO:0006015">
    <property type="term" value="P:5-phosphoribose 1-diphosphate biosynthetic process"/>
    <property type="evidence" value="ECO:0007669"/>
    <property type="project" value="UniProtKB-UniRule"/>
</dbReference>
<dbReference type="GO" id="GO:0006164">
    <property type="term" value="P:purine nucleotide biosynthetic process"/>
    <property type="evidence" value="ECO:0007669"/>
    <property type="project" value="TreeGrafter"/>
</dbReference>
<dbReference type="GO" id="GO:0009156">
    <property type="term" value="P:ribonucleoside monophosphate biosynthetic process"/>
    <property type="evidence" value="ECO:0007669"/>
    <property type="project" value="InterPro"/>
</dbReference>
<dbReference type="CDD" id="cd06223">
    <property type="entry name" value="PRTases_typeI"/>
    <property type="match status" value="1"/>
</dbReference>
<dbReference type="FunFam" id="3.40.50.2020:FF:000007">
    <property type="entry name" value="Ribose-phosphate pyrophosphokinase"/>
    <property type="match status" value="1"/>
</dbReference>
<dbReference type="Gene3D" id="3.40.50.2020">
    <property type="match status" value="2"/>
</dbReference>
<dbReference type="HAMAP" id="MF_00583_B">
    <property type="entry name" value="RibP_PPkinase_B"/>
    <property type="match status" value="1"/>
</dbReference>
<dbReference type="InterPro" id="IPR000842">
    <property type="entry name" value="PRib_PP_synth_CS"/>
</dbReference>
<dbReference type="InterPro" id="IPR029099">
    <property type="entry name" value="Pribosyltran_N"/>
</dbReference>
<dbReference type="InterPro" id="IPR000836">
    <property type="entry name" value="PRibTrfase_dom"/>
</dbReference>
<dbReference type="InterPro" id="IPR029057">
    <property type="entry name" value="PRTase-like"/>
</dbReference>
<dbReference type="InterPro" id="IPR005946">
    <property type="entry name" value="Rib-P_diPkinase"/>
</dbReference>
<dbReference type="InterPro" id="IPR037515">
    <property type="entry name" value="Rib-P_diPkinase_bac"/>
</dbReference>
<dbReference type="NCBIfam" id="NF002320">
    <property type="entry name" value="PRK01259.1"/>
    <property type="match status" value="1"/>
</dbReference>
<dbReference type="NCBIfam" id="NF002844">
    <property type="entry name" value="PRK03092.1"/>
    <property type="match status" value="1"/>
</dbReference>
<dbReference type="NCBIfam" id="TIGR01251">
    <property type="entry name" value="ribP_PPkin"/>
    <property type="match status" value="1"/>
</dbReference>
<dbReference type="PANTHER" id="PTHR10210">
    <property type="entry name" value="RIBOSE-PHOSPHATE DIPHOSPHOKINASE FAMILY MEMBER"/>
    <property type="match status" value="1"/>
</dbReference>
<dbReference type="PANTHER" id="PTHR10210:SF41">
    <property type="entry name" value="RIBOSE-PHOSPHATE PYROPHOSPHOKINASE 1, CHLOROPLASTIC"/>
    <property type="match status" value="1"/>
</dbReference>
<dbReference type="Pfam" id="PF14572">
    <property type="entry name" value="Pribosyl_synth"/>
    <property type="match status" value="1"/>
</dbReference>
<dbReference type="Pfam" id="PF13793">
    <property type="entry name" value="Pribosyltran_N"/>
    <property type="match status" value="1"/>
</dbReference>
<dbReference type="SMART" id="SM01400">
    <property type="entry name" value="Pribosyltran_N"/>
    <property type="match status" value="1"/>
</dbReference>
<dbReference type="SUPFAM" id="SSF53271">
    <property type="entry name" value="PRTase-like"/>
    <property type="match status" value="1"/>
</dbReference>
<dbReference type="PROSITE" id="PS00114">
    <property type="entry name" value="PRPP_SYNTHASE"/>
    <property type="match status" value="1"/>
</dbReference>
<comment type="function">
    <text evidence="1">Involved in the biosynthesis of the central metabolite phospho-alpha-D-ribosyl-1-pyrophosphate (PRPP) via the transfer of pyrophosphoryl group from ATP to 1-hydroxyl of ribose-5-phosphate (Rib-5-P).</text>
</comment>
<comment type="catalytic activity">
    <reaction evidence="1">
        <text>D-ribose 5-phosphate + ATP = 5-phospho-alpha-D-ribose 1-diphosphate + AMP + H(+)</text>
        <dbReference type="Rhea" id="RHEA:15609"/>
        <dbReference type="ChEBI" id="CHEBI:15378"/>
        <dbReference type="ChEBI" id="CHEBI:30616"/>
        <dbReference type="ChEBI" id="CHEBI:58017"/>
        <dbReference type="ChEBI" id="CHEBI:78346"/>
        <dbReference type="ChEBI" id="CHEBI:456215"/>
        <dbReference type="EC" id="2.7.6.1"/>
    </reaction>
</comment>
<comment type="cofactor">
    <cofactor evidence="1">
        <name>Mg(2+)</name>
        <dbReference type="ChEBI" id="CHEBI:18420"/>
    </cofactor>
    <text evidence="1">Binds 2 Mg(2+) ions per subunit.</text>
</comment>
<comment type="pathway">
    <text evidence="1">Metabolic intermediate biosynthesis; 5-phospho-alpha-D-ribose 1-diphosphate biosynthesis; 5-phospho-alpha-D-ribose 1-diphosphate from D-ribose 5-phosphate (route I): step 1/1.</text>
</comment>
<comment type="subunit">
    <text evidence="1">Homohexamer.</text>
</comment>
<comment type="subcellular location">
    <subcellularLocation>
        <location evidence="1">Cytoplasm</location>
    </subcellularLocation>
</comment>
<comment type="similarity">
    <text evidence="1">Belongs to the ribose-phosphate pyrophosphokinase family. Class I subfamily.</text>
</comment>
<comment type="sequence caution" evidence="2">
    <conflict type="erroneous initiation">
        <sequence resource="EMBL-CDS" id="AAN24774"/>
    </conflict>
    <text>Extended N-terminus.</text>
</comment>
<organism>
    <name type="scientific">Bifidobacterium longum (strain NCC 2705)</name>
    <dbReference type="NCBI Taxonomy" id="206672"/>
    <lineage>
        <taxon>Bacteria</taxon>
        <taxon>Bacillati</taxon>
        <taxon>Actinomycetota</taxon>
        <taxon>Actinomycetes</taxon>
        <taxon>Bifidobacteriales</taxon>
        <taxon>Bifidobacteriaceae</taxon>
        <taxon>Bifidobacterium</taxon>
    </lineage>
</organism>
<protein>
    <recommendedName>
        <fullName evidence="1">Ribose-phosphate pyrophosphokinase</fullName>
        <shortName evidence="1">RPPK</shortName>
        <ecNumber evidence="1">2.7.6.1</ecNumber>
    </recommendedName>
    <alternativeName>
        <fullName evidence="1">5-phospho-D-ribosyl alpha-1-diphosphate synthase</fullName>
    </alternativeName>
    <alternativeName>
        <fullName evidence="1">Phosphoribosyl diphosphate synthase</fullName>
    </alternativeName>
    <alternativeName>
        <fullName evidence="1">Phosphoribosyl pyrophosphate synthase</fullName>
        <shortName evidence="1">P-Rib-PP synthase</shortName>
        <shortName evidence="1">PRPP synthase</shortName>
        <shortName evidence="1">PRPPase</shortName>
    </alternativeName>
</protein>